<dbReference type="EMBL" id="CP000283">
    <property type="protein sequence ID" value="ABE40422.1"/>
    <property type="molecule type" value="Genomic_DNA"/>
</dbReference>
<dbReference type="SMR" id="Q134R7"/>
<dbReference type="STRING" id="316057.RPD_3196"/>
<dbReference type="KEGG" id="rpd:RPD_3196"/>
<dbReference type="eggNOG" id="COG0222">
    <property type="taxonomic scope" value="Bacteria"/>
</dbReference>
<dbReference type="HOGENOM" id="CLU_086499_3_0_5"/>
<dbReference type="BioCyc" id="RPAL316057:RPD_RS16045-MONOMER"/>
<dbReference type="Proteomes" id="UP000001818">
    <property type="component" value="Chromosome"/>
</dbReference>
<dbReference type="GO" id="GO:0022625">
    <property type="term" value="C:cytosolic large ribosomal subunit"/>
    <property type="evidence" value="ECO:0007669"/>
    <property type="project" value="TreeGrafter"/>
</dbReference>
<dbReference type="GO" id="GO:0003729">
    <property type="term" value="F:mRNA binding"/>
    <property type="evidence" value="ECO:0007669"/>
    <property type="project" value="TreeGrafter"/>
</dbReference>
<dbReference type="GO" id="GO:0003735">
    <property type="term" value="F:structural constituent of ribosome"/>
    <property type="evidence" value="ECO:0007669"/>
    <property type="project" value="InterPro"/>
</dbReference>
<dbReference type="GO" id="GO:0006412">
    <property type="term" value="P:translation"/>
    <property type="evidence" value="ECO:0007669"/>
    <property type="project" value="UniProtKB-UniRule"/>
</dbReference>
<dbReference type="CDD" id="cd00387">
    <property type="entry name" value="Ribosomal_L7_L12"/>
    <property type="match status" value="1"/>
</dbReference>
<dbReference type="FunFam" id="1.20.5.710:FF:000007">
    <property type="entry name" value="50S ribosomal protein L7/L12"/>
    <property type="match status" value="1"/>
</dbReference>
<dbReference type="FunFam" id="3.30.1390.10:FF:000001">
    <property type="entry name" value="50S ribosomal protein L7/L12"/>
    <property type="match status" value="1"/>
</dbReference>
<dbReference type="Gene3D" id="3.30.1390.10">
    <property type="match status" value="1"/>
</dbReference>
<dbReference type="Gene3D" id="1.20.5.710">
    <property type="entry name" value="Single helix bin"/>
    <property type="match status" value="1"/>
</dbReference>
<dbReference type="HAMAP" id="MF_00368">
    <property type="entry name" value="Ribosomal_bL12"/>
    <property type="match status" value="1"/>
</dbReference>
<dbReference type="InterPro" id="IPR000206">
    <property type="entry name" value="Ribosomal_bL12"/>
</dbReference>
<dbReference type="InterPro" id="IPR013823">
    <property type="entry name" value="Ribosomal_bL12_C"/>
</dbReference>
<dbReference type="InterPro" id="IPR014719">
    <property type="entry name" value="Ribosomal_bL12_C/ClpS-like"/>
</dbReference>
<dbReference type="InterPro" id="IPR008932">
    <property type="entry name" value="Ribosomal_bL12_oligo"/>
</dbReference>
<dbReference type="InterPro" id="IPR036235">
    <property type="entry name" value="Ribosomal_bL12_oligo_N_sf"/>
</dbReference>
<dbReference type="NCBIfam" id="TIGR00855">
    <property type="entry name" value="L12"/>
    <property type="match status" value="1"/>
</dbReference>
<dbReference type="PANTHER" id="PTHR45987">
    <property type="entry name" value="39S RIBOSOMAL PROTEIN L12"/>
    <property type="match status" value="1"/>
</dbReference>
<dbReference type="PANTHER" id="PTHR45987:SF4">
    <property type="entry name" value="LARGE RIBOSOMAL SUBUNIT PROTEIN BL12M"/>
    <property type="match status" value="1"/>
</dbReference>
<dbReference type="Pfam" id="PF00542">
    <property type="entry name" value="Ribosomal_L12"/>
    <property type="match status" value="1"/>
</dbReference>
<dbReference type="Pfam" id="PF16320">
    <property type="entry name" value="Ribosomal_L12_N"/>
    <property type="match status" value="1"/>
</dbReference>
<dbReference type="SUPFAM" id="SSF54736">
    <property type="entry name" value="ClpS-like"/>
    <property type="match status" value="1"/>
</dbReference>
<dbReference type="SUPFAM" id="SSF48300">
    <property type="entry name" value="Ribosomal protein L7/12, oligomerisation (N-terminal) domain"/>
    <property type="match status" value="1"/>
</dbReference>
<proteinExistence type="inferred from homology"/>
<gene>
    <name evidence="1" type="primary">rplL</name>
    <name type="ordered locus">RPD_3196</name>
</gene>
<sequence>MADLQKIVDDLSSLTVLEAAELAKLLEEKWGVSAAAAVAVAAAPGAAAAAVEEKTEFTVVLASAGDKKIEVIKEVRAITGLGLKEAKDLVEGAPKPIKEGVNKDEAEKLKAQLEKAGAKVELK</sequence>
<feature type="chain" id="PRO_1000007072" description="Large ribosomal subunit protein bL12">
    <location>
        <begin position="1"/>
        <end position="123"/>
    </location>
</feature>
<protein>
    <recommendedName>
        <fullName evidence="1">Large ribosomal subunit protein bL12</fullName>
    </recommendedName>
    <alternativeName>
        <fullName evidence="2">50S ribosomal protein L7/L12</fullName>
    </alternativeName>
</protein>
<comment type="function">
    <text evidence="1">Forms part of the ribosomal stalk which helps the ribosome interact with GTP-bound translation factors. Is thus essential for accurate translation.</text>
</comment>
<comment type="subunit">
    <text evidence="1">Homodimer. Part of the ribosomal stalk of the 50S ribosomal subunit. Forms a multimeric L10(L12)X complex, where L10 forms an elongated spine to which 2 to 4 L12 dimers bind in a sequential fashion. Binds GTP-bound translation factors.</text>
</comment>
<comment type="similarity">
    <text evidence="1">Belongs to the bacterial ribosomal protein bL12 family.</text>
</comment>
<evidence type="ECO:0000255" key="1">
    <source>
        <dbReference type="HAMAP-Rule" id="MF_00368"/>
    </source>
</evidence>
<evidence type="ECO:0000305" key="2"/>
<accession>Q134R7</accession>
<name>RL7_RHOPS</name>
<keyword id="KW-0687">Ribonucleoprotein</keyword>
<keyword id="KW-0689">Ribosomal protein</keyword>
<reference key="1">
    <citation type="submission" date="2006-03" db="EMBL/GenBank/DDBJ databases">
        <title>Complete sequence of Rhodopseudomonas palustris BisB5.</title>
        <authorList>
            <consortium name="US DOE Joint Genome Institute"/>
            <person name="Copeland A."/>
            <person name="Lucas S."/>
            <person name="Lapidus A."/>
            <person name="Barry K."/>
            <person name="Detter J.C."/>
            <person name="Glavina del Rio T."/>
            <person name="Hammon N."/>
            <person name="Israni S."/>
            <person name="Dalin E."/>
            <person name="Tice H."/>
            <person name="Pitluck S."/>
            <person name="Chain P."/>
            <person name="Malfatti S."/>
            <person name="Shin M."/>
            <person name="Vergez L."/>
            <person name="Schmutz J."/>
            <person name="Larimer F."/>
            <person name="Land M."/>
            <person name="Hauser L."/>
            <person name="Pelletier D.A."/>
            <person name="Kyrpides N."/>
            <person name="Lykidis A."/>
            <person name="Oda Y."/>
            <person name="Harwood C.S."/>
            <person name="Richardson P."/>
        </authorList>
    </citation>
    <scope>NUCLEOTIDE SEQUENCE [LARGE SCALE GENOMIC DNA]</scope>
    <source>
        <strain>BisB5</strain>
    </source>
</reference>
<organism>
    <name type="scientific">Rhodopseudomonas palustris (strain BisB5)</name>
    <dbReference type="NCBI Taxonomy" id="316057"/>
    <lineage>
        <taxon>Bacteria</taxon>
        <taxon>Pseudomonadati</taxon>
        <taxon>Pseudomonadota</taxon>
        <taxon>Alphaproteobacteria</taxon>
        <taxon>Hyphomicrobiales</taxon>
        <taxon>Nitrobacteraceae</taxon>
        <taxon>Rhodopseudomonas</taxon>
    </lineage>
</organism>